<feature type="chain" id="PRO_0000133992" description="Enolase">
    <location>
        <begin position="1"/>
        <end position="430"/>
    </location>
</feature>
<feature type="active site" description="Proton donor" evidence="1">
    <location>
        <position position="209"/>
    </location>
</feature>
<feature type="active site" description="Proton acceptor" evidence="1">
    <location>
        <position position="338"/>
    </location>
</feature>
<feature type="binding site" evidence="1">
    <location>
        <position position="167"/>
    </location>
    <ligand>
        <name>(2R)-2-phosphoglycerate</name>
        <dbReference type="ChEBI" id="CHEBI:58289"/>
    </ligand>
</feature>
<feature type="binding site" evidence="1">
    <location>
        <position position="245"/>
    </location>
    <ligand>
        <name>Mg(2+)</name>
        <dbReference type="ChEBI" id="CHEBI:18420"/>
    </ligand>
</feature>
<feature type="binding site" evidence="1">
    <location>
        <position position="286"/>
    </location>
    <ligand>
        <name>Mg(2+)</name>
        <dbReference type="ChEBI" id="CHEBI:18420"/>
    </ligand>
</feature>
<feature type="binding site" evidence="1">
    <location>
        <position position="313"/>
    </location>
    <ligand>
        <name>Mg(2+)</name>
        <dbReference type="ChEBI" id="CHEBI:18420"/>
    </ligand>
</feature>
<feature type="binding site" evidence="1">
    <location>
        <position position="338"/>
    </location>
    <ligand>
        <name>(2R)-2-phosphoglycerate</name>
        <dbReference type="ChEBI" id="CHEBI:58289"/>
    </ligand>
</feature>
<feature type="binding site" evidence="1">
    <location>
        <position position="367"/>
    </location>
    <ligand>
        <name>(2R)-2-phosphoglycerate</name>
        <dbReference type="ChEBI" id="CHEBI:58289"/>
    </ligand>
</feature>
<feature type="binding site" evidence="1">
    <location>
        <position position="368"/>
    </location>
    <ligand>
        <name>(2R)-2-phosphoglycerate</name>
        <dbReference type="ChEBI" id="CHEBI:58289"/>
    </ligand>
</feature>
<feature type="binding site" evidence="1">
    <location>
        <position position="389"/>
    </location>
    <ligand>
        <name>(2R)-2-phosphoglycerate</name>
        <dbReference type="ChEBI" id="CHEBI:58289"/>
    </ligand>
</feature>
<proteinExistence type="inferred from homology"/>
<reference key="1">
    <citation type="journal article" date="2003" name="Nature">
        <title>The genome of a motile marine Synechococcus.</title>
        <authorList>
            <person name="Palenik B."/>
            <person name="Brahamsha B."/>
            <person name="Larimer F.W."/>
            <person name="Land M.L."/>
            <person name="Hauser L."/>
            <person name="Chain P."/>
            <person name="Lamerdin J.E."/>
            <person name="Regala W."/>
            <person name="Allen E.E."/>
            <person name="McCarren J."/>
            <person name="Paulsen I.T."/>
            <person name="Dufresne A."/>
            <person name="Partensky F."/>
            <person name="Webb E.A."/>
            <person name="Waterbury J."/>
        </authorList>
    </citation>
    <scope>NUCLEOTIDE SEQUENCE [LARGE SCALE GENOMIC DNA]</scope>
    <source>
        <strain>WH8102</strain>
    </source>
</reference>
<gene>
    <name evidence="1" type="primary">eno</name>
    <name type="ordered locus">SYNW2348</name>
</gene>
<sequence length="430" mass="45229">MIDSLDLVIDTIVAREVLDSRGNPTVEAEVLLEGGAMGRAIVPSGASTGAHEAHELRDGGDRYMGKGVSQAVTHIEERIAPTLCGLSALDQAAVDAAMLELDGSDNKSSLGANAILAVSMATARAAANGLGLPLYRYLGGPMANLLPVPLMNVINGGAHAANSLDFQEFMLVPHGAPSFREALRMGTEVFHTLKGLLKAKGMSTSVGDEGGFAPDLGNVEAGEILVEAITKAGYKPGEQISLALDVASTEFFENGRYAFDGGNYDSAEMVGQLEQLVEKFPIVSIEDGLAEDDWEGWKLLTERLGGKVQLVGDDLFVTNTKRLQQGIDNSTANSILIKVNQIGSLTETLQAIDLAGRSGYTSVISHRSGETEDTTIADLSVATRAGQIKTGSLSRSERVAKYNQLLRIEDELGSQAVYAGAVGQGPRGNA</sequence>
<organism>
    <name type="scientific">Parasynechococcus marenigrum (strain WH8102)</name>
    <dbReference type="NCBI Taxonomy" id="84588"/>
    <lineage>
        <taxon>Bacteria</taxon>
        <taxon>Bacillati</taxon>
        <taxon>Cyanobacteriota</taxon>
        <taxon>Cyanophyceae</taxon>
        <taxon>Synechococcales</taxon>
        <taxon>Prochlorococcaceae</taxon>
        <taxon>Parasynechococcus</taxon>
        <taxon>Parasynechococcus marenigrum</taxon>
    </lineage>
</organism>
<keyword id="KW-0963">Cytoplasm</keyword>
<keyword id="KW-0324">Glycolysis</keyword>
<keyword id="KW-0456">Lyase</keyword>
<keyword id="KW-0460">Magnesium</keyword>
<keyword id="KW-0479">Metal-binding</keyword>
<keyword id="KW-0964">Secreted</keyword>
<accession>Q7U3T1</accession>
<dbReference type="EC" id="4.2.1.11" evidence="1"/>
<dbReference type="EMBL" id="BX569695">
    <property type="protein sequence ID" value="CAE08863.1"/>
    <property type="molecule type" value="Genomic_DNA"/>
</dbReference>
<dbReference type="RefSeq" id="WP_011129201.1">
    <property type="nucleotide sequence ID" value="NC_005070.1"/>
</dbReference>
<dbReference type="SMR" id="Q7U3T1"/>
<dbReference type="STRING" id="84588.SYNW2348"/>
<dbReference type="KEGG" id="syw:SYNW2348"/>
<dbReference type="eggNOG" id="COG0148">
    <property type="taxonomic scope" value="Bacteria"/>
</dbReference>
<dbReference type="HOGENOM" id="CLU_031223_2_1_3"/>
<dbReference type="UniPathway" id="UPA00109">
    <property type="reaction ID" value="UER00187"/>
</dbReference>
<dbReference type="Proteomes" id="UP000001422">
    <property type="component" value="Chromosome"/>
</dbReference>
<dbReference type="GO" id="GO:0009986">
    <property type="term" value="C:cell surface"/>
    <property type="evidence" value="ECO:0007669"/>
    <property type="project" value="UniProtKB-SubCell"/>
</dbReference>
<dbReference type="GO" id="GO:0005576">
    <property type="term" value="C:extracellular region"/>
    <property type="evidence" value="ECO:0007669"/>
    <property type="project" value="UniProtKB-SubCell"/>
</dbReference>
<dbReference type="GO" id="GO:0000015">
    <property type="term" value="C:phosphopyruvate hydratase complex"/>
    <property type="evidence" value="ECO:0007669"/>
    <property type="project" value="InterPro"/>
</dbReference>
<dbReference type="GO" id="GO:0000287">
    <property type="term" value="F:magnesium ion binding"/>
    <property type="evidence" value="ECO:0007669"/>
    <property type="project" value="UniProtKB-UniRule"/>
</dbReference>
<dbReference type="GO" id="GO:0004634">
    <property type="term" value="F:phosphopyruvate hydratase activity"/>
    <property type="evidence" value="ECO:0007669"/>
    <property type="project" value="UniProtKB-UniRule"/>
</dbReference>
<dbReference type="GO" id="GO:0006096">
    <property type="term" value="P:glycolytic process"/>
    <property type="evidence" value="ECO:0007669"/>
    <property type="project" value="UniProtKB-UniRule"/>
</dbReference>
<dbReference type="CDD" id="cd03313">
    <property type="entry name" value="enolase"/>
    <property type="match status" value="1"/>
</dbReference>
<dbReference type="FunFam" id="3.20.20.120:FF:000001">
    <property type="entry name" value="Enolase"/>
    <property type="match status" value="1"/>
</dbReference>
<dbReference type="FunFam" id="3.30.390.10:FF:000001">
    <property type="entry name" value="Enolase"/>
    <property type="match status" value="1"/>
</dbReference>
<dbReference type="Gene3D" id="3.20.20.120">
    <property type="entry name" value="Enolase-like C-terminal domain"/>
    <property type="match status" value="1"/>
</dbReference>
<dbReference type="Gene3D" id="3.30.390.10">
    <property type="entry name" value="Enolase-like, N-terminal domain"/>
    <property type="match status" value="1"/>
</dbReference>
<dbReference type="HAMAP" id="MF_00318">
    <property type="entry name" value="Enolase"/>
    <property type="match status" value="1"/>
</dbReference>
<dbReference type="InterPro" id="IPR000941">
    <property type="entry name" value="Enolase"/>
</dbReference>
<dbReference type="InterPro" id="IPR036849">
    <property type="entry name" value="Enolase-like_C_sf"/>
</dbReference>
<dbReference type="InterPro" id="IPR029017">
    <property type="entry name" value="Enolase-like_N"/>
</dbReference>
<dbReference type="InterPro" id="IPR020810">
    <property type="entry name" value="Enolase_C"/>
</dbReference>
<dbReference type="InterPro" id="IPR020809">
    <property type="entry name" value="Enolase_CS"/>
</dbReference>
<dbReference type="InterPro" id="IPR020811">
    <property type="entry name" value="Enolase_N"/>
</dbReference>
<dbReference type="NCBIfam" id="TIGR01060">
    <property type="entry name" value="eno"/>
    <property type="match status" value="1"/>
</dbReference>
<dbReference type="PANTHER" id="PTHR11902">
    <property type="entry name" value="ENOLASE"/>
    <property type="match status" value="1"/>
</dbReference>
<dbReference type="PANTHER" id="PTHR11902:SF1">
    <property type="entry name" value="ENOLASE"/>
    <property type="match status" value="1"/>
</dbReference>
<dbReference type="Pfam" id="PF00113">
    <property type="entry name" value="Enolase_C"/>
    <property type="match status" value="1"/>
</dbReference>
<dbReference type="Pfam" id="PF03952">
    <property type="entry name" value="Enolase_N"/>
    <property type="match status" value="1"/>
</dbReference>
<dbReference type="PIRSF" id="PIRSF001400">
    <property type="entry name" value="Enolase"/>
    <property type="match status" value="1"/>
</dbReference>
<dbReference type="PRINTS" id="PR00148">
    <property type="entry name" value="ENOLASE"/>
</dbReference>
<dbReference type="SFLD" id="SFLDF00002">
    <property type="entry name" value="enolase"/>
    <property type="match status" value="1"/>
</dbReference>
<dbReference type="SFLD" id="SFLDG00178">
    <property type="entry name" value="enolase"/>
    <property type="match status" value="1"/>
</dbReference>
<dbReference type="SMART" id="SM01192">
    <property type="entry name" value="Enolase_C"/>
    <property type="match status" value="1"/>
</dbReference>
<dbReference type="SMART" id="SM01193">
    <property type="entry name" value="Enolase_N"/>
    <property type="match status" value="1"/>
</dbReference>
<dbReference type="SUPFAM" id="SSF51604">
    <property type="entry name" value="Enolase C-terminal domain-like"/>
    <property type="match status" value="1"/>
</dbReference>
<dbReference type="SUPFAM" id="SSF54826">
    <property type="entry name" value="Enolase N-terminal domain-like"/>
    <property type="match status" value="1"/>
</dbReference>
<dbReference type="PROSITE" id="PS00164">
    <property type="entry name" value="ENOLASE"/>
    <property type="match status" value="1"/>
</dbReference>
<comment type="function">
    <text evidence="1">Catalyzes the reversible conversion of 2-phosphoglycerate (2-PG) into phosphoenolpyruvate (PEP). It is essential for the degradation of carbohydrates via glycolysis.</text>
</comment>
<comment type="catalytic activity">
    <reaction evidence="1">
        <text>(2R)-2-phosphoglycerate = phosphoenolpyruvate + H2O</text>
        <dbReference type="Rhea" id="RHEA:10164"/>
        <dbReference type="ChEBI" id="CHEBI:15377"/>
        <dbReference type="ChEBI" id="CHEBI:58289"/>
        <dbReference type="ChEBI" id="CHEBI:58702"/>
        <dbReference type="EC" id="4.2.1.11"/>
    </reaction>
</comment>
<comment type="cofactor">
    <cofactor evidence="1">
        <name>Mg(2+)</name>
        <dbReference type="ChEBI" id="CHEBI:18420"/>
    </cofactor>
    <text evidence="1">Binds a second Mg(2+) ion via substrate during catalysis.</text>
</comment>
<comment type="pathway">
    <text evidence="1">Carbohydrate degradation; glycolysis; pyruvate from D-glyceraldehyde 3-phosphate: step 4/5.</text>
</comment>
<comment type="subcellular location">
    <subcellularLocation>
        <location evidence="1">Cytoplasm</location>
    </subcellularLocation>
    <subcellularLocation>
        <location evidence="1">Secreted</location>
    </subcellularLocation>
    <subcellularLocation>
        <location evidence="1">Cell surface</location>
    </subcellularLocation>
    <text evidence="1">Fractions of enolase are present in both the cytoplasm and on the cell surface.</text>
</comment>
<comment type="similarity">
    <text evidence="1">Belongs to the enolase family.</text>
</comment>
<protein>
    <recommendedName>
        <fullName evidence="1">Enolase</fullName>
        <ecNumber evidence="1">4.2.1.11</ecNumber>
    </recommendedName>
    <alternativeName>
        <fullName evidence="1">2-phospho-D-glycerate hydro-lyase</fullName>
    </alternativeName>
    <alternativeName>
        <fullName evidence="1">2-phosphoglycerate dehydratase</fullName>
    </alternativeName>
</protein>
<name>ENO_PARMW</name>
<evidence type="ECO:0000255" key="1">
    <source>
        <dbReference type="HAMAP-Rule" id="MF_00318"/>
    </source>
</evidence>